<comment type="function">
    <text evidence="1">Catalyzes the attachment of serine to tRNA(Ser). Is also able to aminoacylate tRNA(Sec) with serine, to form the misacylated tRNA L-seryl-tRNA(Sec), which will be further converted into selenocysteinyl-tRNA(Sec).</text>
</comment>
<comment type="catalytic activity">
    <reaction evidence="1">
        <text>tRNA(Ser) + L-serine + ATP = L-seryl-tRNA(Ser) + AMP + diphosphate + H(+)</text>
        <dbReference type="Rhea" id="RHEA:12292"/>
        <dbReference type="Rhea" id="RHEA-COMP:9669"/>
        <dbReference type="Rhea" id="RHEA-COMP:9703"/>
        <dbReference type="ChEBI" id="CHEBI:15378"/>
        <dbReference type="ChEBI" id="CHEBI:30616"/>
        <dbReference type="ChEBI" id="CHEBI:33019"/>
        <dbReference type="ChEBI" id="CHEBI:33384"/>
        <dbReference type="ChEBI" id="CHEBI:78442"/>
        <dbReference type="ChEBI" id="CHEBI:78533"/>
        <dbReference type="ChEBI" id="CHEBI:456215"/>
        <dbReference type="EC" id="6.1.1.11"/>
    </reaction>
</comment>
<comment type="catalytic activity">
    <reaction evidence="1">
        <text>tRNA(Sec) + L-serine + ATP = L-seryl-tRNA(Sec) + AMP + diphosphate + H(+)</text>
        <dbReference type="Rhea" id="RHEA:42580"/>
        <dbReference type="Rhea" id="RHEA-COMP:9742"/>
        <dbReference type="Rhea" id="RHEA-COMP:10128"/>
        <dbReference type="ChEBI" id="CHEBI:15378"/>
        <dbReference type="ChEBI" id="CHEBI:30616"/>
        <dbReference type="ChEBI" id="CHEBI:33019"/>
        <dbReference type="ChEBI" id="CHEBI:33384"/>
        <dbReference type="ChEBI" id="CHEBI:78442"/>
        <dbReference type="ChEBI" id="CHEBI:78533"/>
        <dbReference type="ChEBI" id="CHEBI:456215"/>
        <dbReference type="EC" id="6.1.1.11"/>
    </reaction>
</comment>
<comment type="pathway">
    <text evidence="1">Aminoacyl-tRNA biosynthesis; selenocysteinyl-tRNA(Sec) biosynthesis; L-seryl-tRNA(Sec) from L-serine and tRNA(Sec): step 1/1.</text>
</comment>
<comment type="subunit">
    <text evidence="1">Homodimer. The tRNA molecule binds across the dimer.</text>
</comment>
<comment type="subcellular location">
    <subcellularLocation>
        <location evidence="1">Cytoplasm</location>
    </subcellularLocation>
</comment>
<comment type="domain">
    <text evidence="1">Consists of two distinct domains, a catalytic core and a N-terminal extension that is involved in tRNA binding.</text>
</comment>
<comment type="similarity">
    <text evidence="1">Belongs to the class-II aminoacyl-tRNA synthetase family. Type-1 seryl-tRNA synthetase subfamily.</text>
</comment>
<reference key="1">
    <citation type="submission" date="2008-05" db="EMBL/GenBank/DDBJ databases">
        <title>Genome sequence of Helicobacter pylori from the remote Amazon: traces of Asian ancestry of the first Americans.</title>
        <authorList>
            <person name="Kersulyte D."/>
            <person name="Kalia A."/>
            <person name="Gilman R.H."/>
            <person name="Berg D.E."/>
        </authorList>
    </citation>
    <scope>NUCLEOTIDE SEQUENCE [LARGE SCALE GENOMIC DNA]</scope>
    <source>
        <strain>Shi470</strain>
    </source>
</reference>
<organism>
    <name type="scientific">Helicobacter pylori (strain Shi470)</name>
    <dbReference type="NCBI Taxonomy" id="512562"/>
    <lineage>
        <taxon>Bacteria</taxon>
        <taxon>Pseudomonadati</taxon>
        <taxon>Campylobacterota</taxon>
        <taxon>Epsilonproteobacteria</taxon>
        <taxon>Campylobacterales</taxon>
        <taxon>Helicobacteraceae</taxon>
        <taxon>Helicobacter</taxon>
    </lineage>
</organism>
<evidence type="ECO:0000255" key="1">
    <source>
        <dbReference type="HAMAP-Rule" id="MF_00176"/>
    </source>
</evidence>
<keyword id="KW-0030">Aminoacyl-tRNA synthetase</keyword>
<keyword id="KW-0067">ATP-binding</keyword>
<keyword id="KW-0963">Cytoplasm</keyword>
<keyword id="KW-0436">Ligase</keyword>
<keyword id="KW-0547">Nucleotide-binding</keyword>
<keyword id="KW-0648">Protein biosynthesis</keyword>
<accession>B2UVM6</accession>
<name>SYS_HELPS</name>
<proteinExistence type="inferred from homology"/>
<feature type="chain" id="PRO_1000098077" description="Serine--tRNA ligase">
    <location>
        <begin position="1"/>
        <end position="415"/>
    </location>
</feature>
<feature type="binding site" evidence="1">
    <location>
        <begin position="231"/>
        <end position="233"/>
    </location>
    <ligand>
        <name>L-serine</name>
        <dbReference type="ChEBI" id="CHEBI:33384"/>
    </ligand>
</feature>
<feature type="binding site" evidence="1">
    <location>
        <begin position="262"/>
        <end position="264"/>
    </location>
    <ligand>
        <name>ATP</name>
        <dbReference type="ChEBI" id="CHEBI:30616"/>
    </ligand>
</feature>
<feature type="binding site" evidence="1">
    <location>
        <position position="285"/>
    </location>
    <ligand>
        <name>L-serine</name>
        <dbReference type="ChEBI" id="CHEBI:33384"/>
    </ligand>
</feature>
<feature type="binding site" evidence="1">
    <location>
        <begin position="349"/>
        <end position="352"/>
    </location>
    <ligand>
        <name>ATP</name>
        <dbReference type="ChEBI" id="CHEBI:30616"/>
    </ligand>
</feature>
<feature type="binding site" evidence="1">
    <location>
        <position position="383"/>
    </location>
    <ligand>
        <name>L-serine</name>
        <dbReference type="ChEBI" id="CHEBI:33384"/>
    </ligand>
</feature>
<protein>
    <recommendedName>
        <fullName evidence="1">Serine--tRNA ligase</fullName>
        <ecNumber evidence="1">6.1.1.11</ecNumber>
    </recommendedName>
    <alternativeName>
        <fullName evidence="1">Seryl-tRNA synthetase</fullName>
        <shortName evidence="1">SerRS</shortName>
    </alternativeName>
    <alternativeName>
        <fullName evidence="1">Seryl-tRNA(Ser/Sec) synthetase</fullName>
    </alternativeName>
</protein>
<sequence length="415" mass="47319">MIDKKLLLQDFEMVALSLKKRNNAMDDALERLREVITHYKKQLIELEGLQAFQNKVSKEFGIKMAQKVDTSDLKKELENNKIKLNELSKSVGELEQQIDLRLSIIPNLVDEKTPLGASEEDNIEIKKILTPRNFTFKPKEHFELAQQNGWIDFESGVKLAKSRFSVIRGFGAKIYRALIHLMLDFNEKNGFEIIYTPALVNEKMLFGTGQLPKFKEDVFKIENENLYLIPTAEVTLTNLYNDTIVSVEKLPIKMTAHTPCFRSEAGSAGKDTRGMIRQHQFDKVELVAITHPKESDAMQEHMLESASEILKALELPHRFVQLCSADLGFSASNTIDIEVWLPGQNCYREISSVSNTRDFQARRAKIRFKENQKNQLAHTLNGSSLAVGRTMVALMENHQQADGSIHIPKALEKYL</sequence>
<gene>
    <name evidence="1" type="primary">serS</name>
    <name type="ordered locus">HPSH_07585</name>
</gene>
<dbReference type="EC" id="6.1.1.11" evidence="1"/>
<dbReference type="EMBL" id="CP001072">
    <property type="protein sequence ID" value="ACD48908.1"/>
    <property type="molecule type" value="Genomic_DNA"/>
</dbReference>
<dbReference type="RefSeq" id="WP_000565791.1">
    <property type="nucleotide sequence ID" value="NC_010698.2"/>
</dbReference>
<dbReference type="SMR" id="B2UVM6"/>
<dbReference type="KEGG" id="hps:HPSH_07585"/>
<dbReference type="HOGENOM" id="CLU_023797_1_1_7"/>
<dbReference type="UniPathway" id="UPA00906">
    <property type="reaction ID" value="UER00895"/>
</dbReference>
<dbReference type="GO" id="GO:0005737">
    <property type="term" value="C:cytoplasm"/>
    <property type="evidence" value="ECO:0007669"/>
    <property type="project" value="UniProtKB-SubCell"/>
</dbReference>
<dbReference type="GO" id="GO:0005524">
    <property type="term" value="F:ATP binding"/>
    <property type="evidence" value="ECO:0007669"/>
    <property type="project" value="UniProtKB-UniRule"/>
</dbReference>
<dbReference type="GO" id="GO:0004828">
    <property type="term" value="F:serine-tRNA ligase activity"/>
    <property type="evidence" value="ECO:0007669"/>
    <property type="project" value="UniProtKB-UniRule"/>
</dbReference>
<dbReference type="GO" id="GO:0016260">
    <property type="term" value="P:selenocysteine biosynthetic process"/>
    <property type="evidence" value="ECO:0007669"/>
    <property type="project" value="UniProtKB-UniRule"/>
</dbReference>
<dbReference type="GO" id="GO:0006434">
    <property type="term" value="P:seryl-tRNA aminoacylation"/>
    <property type="evidence" value="ECO:0007669"/>
    <property type="project" value="UniProtKB-UniRule"/>
</dbReference>
<dbReference type="CDD" id="cd00770">
    <property type="entry name" value="SerRS_core"/>
    <property type="match status" value="1"/>
</dbReference>
<dbReference type="Gene3D" id="3.30.930.10">
    <property type="entry name" value="Bira Bifunctional Protein, Domain 2"/>
    <property type="match status" value="1"/>
</dbReference>
<dbReference type="Gene3D" id="1.10.287.40">
    <property type="entry name" value="Serine-tRNA synthetase, tRNA binding domain"/>
    <property type="match status" value="1"/>
</dbReference>
<dbReference type="HAMAP" id="MF_00176">
    <property type="entry name" value="Ser_tRNA_synth_type1"/>
    <property type="match status" value="1"/>
</dbReference>
<dbReference type="InterPro" id="IPR002314">
    <property type="entry name" value="aa-tRNA-synt_IIb"/>
</dbReference>
<dbReference type="InterPro" id="IPR006195">
    <property type="entry name" value="aa-tRNA-synth_II"/>
</dbReference>
<dbReference type="InterPro" id="IPR045864">
    <property type="entry name" value="aa-tRNA-synth_II/BPL/LPL"/>
</dbReference>
<dbReference type="InterPro" id="IPR002317">
    <property type="entry name" value="Ser-tRNA-ligase_type_1"/>
</dbReference>
<dbReference type="InterPro" id="IPR015866">
    <property type="entry name" value="Ser-tRNA-synth_1_N"/>
</dbReference>
<dbReference type="InterPro" id="IPR042103">
    <property type="entry name" value="SerRS_1_N_sf"/>
</dbReference>
<dbReference type="InterPro" id="IPR033729">
    <property type="entry name" value="SerRS_core"/>
</dbReference>
<dbReference type="InterPro" id="IPR010978">
    <property type="entry name" value="tRNA-bd_arm"/>
</dbReference>
<dbReference type="NCBIfam" id="TIGR00414">
    <property type="entry name" value="serS"/>
    <property type="match status" value="1"/>
</dbReference>
<dbReference type="PANTHER" id="PTHR43697:SF1">
    <property type="entry name" value="SERINE--TRNA LIGASE"/>
    <property type="match status" value="1"/>
</dbReference>
<dbReference type="PANTHER" id="PTHR43697">
    <property type="entry name" value="SERYL-TRNA SYNTHETASE"/>
    <property type="match status" value="1"/>
</dbReference>
<dbReference type="Pfam" id="PF02403">
    <property type="entry name" value="Seryl_tRNA_N"/>
    <property type="match status" value="1"/>
</dbReference>
<dbReference type="Pfam" id="PF00587">
    <property type="entry name" value="tRNA-synt_2b"/>
    <property type="match status" value="1"/>
</dbReference>
<dbReference type="PIRSF" id="PIRSF001529">
    <property type="entry name" value="Ser-tRNA-synth_IIa"/>
    <property type="match status" value="1"/>
</dbReference>
<dbReference type="PRINTS" id="PR00981">
    <property type="entry name" value="TRNASYNTHSER"/>
</dbReference>
<dbReference type="SUPFAM" id="SSF55681">
    <property type="entry name" value="Class II aaRS and biotin synthetases"/>
    <property type="match status" value="1"/>
</dbReference>
<dbReference type="SUPFAM" id="SSF46589">
    <property type="entry name" value="tRNA-binding arm"/>
    <property type="match status" value="1"/>
</dbReference>
<dbReference type="PROSITE" id="PS50862">
    <property type="entry name" value="AA_TRNA_LIGASE_II"/>
    <property type="match status" value="1"/>
</dbReference>